<proteinExistence type="evidence at transcript level"/>
<dbReference type="EMBL" id="Y14339">
    <property type="protein sequence ID" value="CAA74725.1"/>
    <property type="molecule type" value="mRNA"/>
</dbReference>
<dbReference type="PIR" id="T07744">
    <property type="entry name" value="T07744"/>
</dbReference>
<dbReference type="SMR" id="O24030"/>
<dbReference type="FunCoup" id="O24030">
    <property type="interactions" value="2941"/>
</dbReference>
<dbReference type="STRING" id="4081.O24030"/>
<dbReference type="PaxDb" id="4081-Solyc01g111450.2.1"/>
<dbReference type="eggNOG" id="KOG0183">
    <property type="taxonomic scope" value="Eukaryota"/>
</dbReference>
<dbReference type="InParanoid" id="O24030"/>
<dbReference type="Proteomes" id="UP000004994">
    <property type="component" value="Unplaced"/>
</dbReference>
<dbReference type="ExpressionAtlas" id="O24030">
    <property type="expression patterns" value="baseline and differential"/>
</dbReference>
<dbReference type="GO" id="GO:0005737">
    <property type="term" value="C:cytoplasm"/>
    <property type="evidence" value="ECO:0007669"/>
    <property type="project" value="UniProtKB-SubCell"/>
</dbReference>
<dbReference type="GO" id="GO:0005634">
    <property type="term" value="C:nucleus"/>
    <property type="evidence" value="ECO:0000318"/>
    <property type="project" value="GO_Central"/>
</dbReference>
<dbReference type="GO" id="GO:0019773">
    <property type="term" value="C:proteasome core complex, alpha-subunit complex"/>
    <property type="evidence" value="ECO:0000250"/>
    <property type="project" value="UniProtKB"/>
</dbReference>
<dbReference type="GO" id="GO:0043161">
    <property type="term" value="P:proteasome-mediated ubiquitin-dependent protein catabolic process"/>
    <property type="evidence" value="ECO:0000318"/>
    <property type="project" value="GO_Central"/>
</dbReference>
<dbReference type="CDD" id="cd03755">
    <property type="entry name" value="proteasome_alpha_type_7"/>
    <property type="match status" value="1"/>
</dbReference>
<dbReference type="FunFam" id="3.60.20.10:FF:000004">
    <property type="entry name" value="Proteasome subunit alpha type-4"/>
    <property type="match status" value="1"/>
</dbReference>
<dbReference type="Gene3D" id="3.60.20.10">
    <property type="entry name" value="Glutamine Phosphoribosylpyrophosphate, subunit 1, domain 1"/>
    <property type="match status" value="1"/>
</dbReference>
<dbReference type="InterPro" id="IPR029055">
    <property type="entry name" value="Ntn_hydrolases_N"/>
</dbReference>
<dbReference type="InterPro" id="IPR050115">
    <property type="entry name" value="Proteasome_alpha"/>
</dbReference>
<dbReference type="InterPro" id="IPR023332">
    <property type="entry name" value="Proteasome_alpha-type"/>
</dbReference>
<dbReference type="InterPro" id="IPR000426">
    <property type="entry name" value="Proteasome_asu_N"/>
</dbReference>
<dbReference type="InterPro" id="IPR001353">
    <property type="entry name" value="Proteasome_sua/b"/>
</dbReference>
<dbReference type="NCBIfam" id="NF003075">
    <property type="entry name" value="PRK03996.1"/>
    <property type="match status" value="1"/>
</dbReference>
<dbReference type="PANTHER" id="PTHR11599">
    <property type="entry name" value="PROTEASOME SUBUNIT ALPHA/BETA"/>
    <property type="match status" value="1"/>
</dbReference>
<dbReference type="Pfam" id="PF00227">
    <property type="entry name" value="Proteasome"/>
    <property type="match status" value="1"/>
</dbReference>
<dbReference type="Pfam" id="PF10584">
    <property type="entry name" value="Proteasome_A_N"/>
    <property type="match status" value="1"/>
</dbReference>
<dbReference type="SMART" id="SM00948">
    <property type="entry name" value="Proteasome_A_N"/>
    <property type="match status" value="1"/>
</dbReference>
<dbReference type="SUPFAM" id="SSF56235">
    <property type="entry name" value="N-terminal nucleophile aminohydrolases (Ntn hydrolases)"/>
    <property type="match status" value="1"/>
</dbReference>
<dbReference type="PROSITE" id="PS00388">
    <property type="entry name" value="PROTEASOME_ALPHA_1"/>
    <property type="match status" value="1"/>
</dbReference>
<dbReference type="PROSITE" id="PS51475">
    <property type="entry name" value="PROTEASOME_ALPHA_2"/>
    <property type="match status" value="1"/>
</dbReference>
<name>PSA7_SOLLC</name>
<evidence type="ECO:0000250" key="1"/>
<evidence type="ECO:0000255" key="2">
    <source>
        <dbReference type="PROSITE-ProRule" id="PRU00808"/>
    </source>
</evidence>
<organism>
    <name type="scientific">Solanum lycopersicum</name>
    <name type="common">Tomato</name>
    <name type="synonym">Lycopersicon esculentum</name>
    <dbReference type="NCBI Taxonomy" id="4081"/>
    <lineage>
        <taxon>Eukaryota</taxon>
        <taxon>Viridiplantae</taxon>
        <taxon>Streptophyta</taxon>
        <taxon>Embryophyta</taxon>
        <taxon>Tracheophyta</taxon>
        <taxon>Spermatophyta</taxon>
        <taxon>Magnoliopsida</taxon>
        <taxon>eudicotyledons</taxon>
        <taxon>Gunneridae</taxon>
        <taxon>Pentapetalae</taxon>
        <taxon>asterids</taxon>
        <taxon>lamiids</taxon>
        <taxon>Solanales</taxon>
        <taxon>Solanaceae</taxon>
        <taxon>Solanoideae</taxon>
        <taxon>Solaneae</taxon>
        <taxon>Solanum</taxon>
        <taxon>Solanum subgen. Lycopersicon</taxon>
    </lineage>
</organism>
<accession>O24030</accession>
<protein>
    <recommendedName>
        <fullName>Proteasome subunit alpha type-7</fullName>
    </recommendedName>
    <alternativeName>
        <fullName>20S proteasome alpha subunit D</fullName>
    </alternativeName>
    <alternativeName>
        <fullName>20S proteasome subunit alpha-4</fullName>
    </alternativeName>
</protein>
<gene>
    <name type="primary">PAD1</name>
    <name type="synonym">PSR5</name>
</gene>
<sequence>MARYDRAITVFSPDGHLFQVEYAMEAVRKGNAAVGVRGTDTVVLGVEKKSTPKLQDSRSVRKIVNLDDHIALACAGLKADARVLVNKARIECQSHRLTVEDPVTVEYITRYIAGLQQKYTQSGGVRPFGLSTLIIGFDPHTGVPSLYQTDPSGTFSAWKANATGRNSNSTREFLEKNYKETSGQETVKLAIRALLEVVESGGKNIEVAVMTKEHGLKQLEEAEIDAIVAEIEAEKAAAEAAKRPHRRNLVELKFVLNYP</sequence>
<keyword id="KW-0963">Cytoplasm</keyword>
<keyword id="KW-0539">Nucleus</keyword>
<keyword id="KW-0647">Proteasome</keyword>
<keyword id="KW-1185">Reference proteome</keyword>
<comment type="function">
    <text>The proteasome is a multicatalytic proteinase complex which is characterized by its ability to cleave peptides with Arg, Phe, Tyr, Leu, and Glu adjacent to the leaving group at neutral or slightly basic pH. The proteasome has an ATP-dependent proteolytic activity.</text>
</comment>
<comment type="subunit">
    <text evidence="1">The 26S proteasome consists of a 20S proteasome core and two 19S regulatory subunits. The 20S proteasome core is composed of 28 subunits that are arranged in four stacked rings, resulting in a barrel-shaped structure. The two end rings are each formed by seven alpha subunits, and the two central rings are each formed by seven beta subunits. The catalytic chamber with the active sites is on the inside of the barrel (By similarity).</text>
</comment>
<comment type="subcellular location">
    <subcellularLocation>
        <location evidence="1">Cytoplasm</location>
    </subcellularLocation>
    <subcellularLocation>
        <location evidence="1">Nucleus</location>
    </subcellularLocation>
</comment>
<comment type="similarity">
    <text evidence="2">Belongs to the peptidase T1A family.</text>
</comment>
<feature type="chain" id="PRO_0000124162" description="Proteasome subunit alpha type-7">
    <location>
        <begin position="1"/>
        <end position="259"/>
    </location>
</feature>
<reference key="1">
    <citation type="online journal article" date="1998" name="Plant Gene Register">
        <title>Cloning and characterization of PSR5, a tomato cDNA encoding a 20S subunit from the proteasome repressed by phosphate starvation.</title>
        <authorList>
            <person name="Ziethe K."/>
            <person name="Stenzel I."/>
            <person name="Hertel S.C."/>
            <person name="Koeck M."/>
        </authorList>
        <locator>PGR98-065</locator>
    </citation>
    <scope>NUCLEOTIDE SEQUENCE [MRNA]</scope>
    <source>
        <strain>cv. Lukullus</strain>
    </source>
</reference>